<keyword id="KW-0963">Cytoplasm</keyword>
<keyword id="KW-0441">Lipid A biosynthesis</keyword>
<keyword id="KW-0444">Lipid biosynthesis</keyword>
<keyword id="KW-0443">Lipid metabolism</keyword>
<keyword id="KW-0456">Lyase</keyword>
<keyword id="KW-1185">Reference proteome</keyword>
<proteinExistence type="inferred from homology"/>
<name>FABZ_SHEB5</name>
<sequence>MSNQMNTMDIKEILKYLPHRYPFLLIDRVLDYTPGVSLQAIKNVSINEPFFQGHFPIQPVMPGVLILEAMAQATGLLAFKTMSSDVPPPGVLYYFAGIDNARFRRVVEPGDQIHFDVKMIKERRGIGVFYGEAKVDGEVVCSAEIMCARREISQ</sequence>
<feature type="chain" id="PRO_1000049859" description="3-hydroxyacyl-[acyl-carrier-protein] dehydratase FabZ">
    <location>
        <begin position="1"/>
        <end position="154"/>
    </location>
</feature>
<feature type="active site" evidence="1">
    <location>
        <position position="54"/>
    </location>
</feature>
<protein>
    <recommendedName>
        <fullName evidence="1">3-hydroxyacyl-[acyl-carrier-protein] dehydratase FabZ</fullName>
        <ecNumber evidence="1">4.2.1.59</ecNumber>
    </recommendedName>
    <alternativeName>
        <fullName evidence="1">(3R)-hydroxymyristoyl-[acyl-carrier-protein] dehydratase</fullName>
        <shortName evidence="1">(3R)-hydroxymyristoyl-ACP dehydrase</shortName>
    </alternativeName>
    <alternativeName>
        <fullName evidence="1">Beta-hydroxyacyl-ACP dehydratase</fullName>
    </alternativeName>
</protein>
<organism>
    <name type="scientific">Shewanella baltica (strain OS155 / ATCC BAA-1091)</name>
    <dbReference type="NCBI Taxonomy" id="325240"/>
    <lineage>
        <taxon>Bacteria</taxon>
        <taxon>Pseudomonadati</taxon>
        <taxon>Pseudomonadota</taxon>
        <taxon>Gammaproteobacteria</taxon>
        <taxon>Alteromonadales</taxon>
        <taxon>Shewanellaceae</taxon>
        <taxon>Shewanella</taxon>
    </lineage>
</organism>
<evidence type="ECO:0000255" key="1">
    <source>
        <dbReference type="HAMAP-Rule" id="MF_00406"/>
    </source>
</evidence>
<comment type="function">
    <text evidence="1">Involved in unsaturated fatty acids biosynthesis. Catalyzes the dehydration of short chain beta-hydroxyacyl-ACPs and long chain saturated and unsaturated beta-hydroxyacyl-ACPs.</text>
</comment>
<comment type="catalytic activity">
    <reaction evidence="1">
        <text>a (3R)-hydroxyacyl-[ACP] = a (2E)-enoyl-[ACP] + H2O</text>
        <dbReference type="Rhea" id="RHEA:13097"/>
        <dbReference type="Rhea" id="RHEA-COMP:9925"/>
        <dbReference type="Rhea" id="RHEA-COMP:9945"/>
        <dbReference type="ChEBI" id="CHEBI:15377"/>
        <dbReference type="ChEBI" id="CHEBI:78784"/>
        <dbReference type="ChEBI" id="CHEBI:78827"/>
        <dbReference type="EC" id="4.2.1.59"/>
    </reaction>
</comment>
<comment type="subcellular location">
    <subcellularLocation>
        <location evidence="1">Cytoplasm</location>
    </subcellularLocation>
</comment>
<comment type="similarity">
    <text evidence="1">Belongs to the thioester dehydratase family. FabZ subfamily.</text>
</comment>
<reference key="1">
    <citation type="submission" date="2007-02" db="EMBL/GenBank/DDBJ databases">
        <title>Complete sequence of chromosome of Shewanella baltica OS155.</title>
        <authorList>
            <consortium name="US DOE Joint Genome Institute"/>
            <person name="Copeland A."/>
            <person name="Lucas S."/>
            <person name="Lapidus A."/>
            <person name="Barry K."/>
            <person name="Detter J.C."/>
            <person name="Glavina del Rio T."/>
            <person name="Hammon N."/>
            <person name="Israni S."/>
            <person name="Dalin E."/>
            <person name="Tice H."/>
            <person name="Pitluck S."/>
            <person name="Sims D.R."/>
            <person name="Brettin T."/>
            <person name="Bruce D."/>
            <person name="Han C."/>
            <person name="Tapia R."/>
            <person name="Brainard J."/>
            <person name="Schmutz J."/>
            <person name="Larimer F."/>
            <person name="Land M."/>
            <person name="Hauser L."/>
            <person name="Kyrpides N."/>
            <person name="Mikhailova N."/>
            <person name="Brettar I."/>
            <person name="Klappenbach J."/>
            <person name="Konstantinidis K."/>
            <person name="Rodrigues J."/>
            <person name="Tiedje J."/>
            <person name="Richardson P."/>
        </authorList>
    </citation>
    <scope>NUCLEOTIDE SEQUENCE [LARGE SCALE GENOMIC DNA]</scope>
    <source>
        <strain>OS155 / ATCC BAA-1091</strain>
    </source>
</reference>
<dbReference type="EC" id="4.2.1.59" evidence="1"/>
<dbReference type="EMBL" id="CP000563">
    <property type="protein sequence ID" value="ABN60979.1"/>
    <property type="molecule type" value="Genomic_DNA"/>
</dbReference>
<dbReference type="RefSeq" id="WP_006080990.1">
    <property type="nucleotide sequence ID" value="NC_009052.1"/>
</dbReference>
<dbReference type="SMR" id="A3D2L6"/>
<dbReference type="STRING" id="325240.Sbal_1461"/>
<dbReference type="GeneID" id="11771739"/>
<dbReference type="KEGG" id="sbl:Sbal_1461"/>
<dbReference type="HOGENOM" id="CLU_078912_1_0_6"/>
<dbReference type="OrthoDB" id="9772788at2"/>
<dbReference type="Proteomes" id="UP000001557">
    <property type="component" value="Chromosome"/>
</dbReference>
<dbReference type="GO" id="GO:0005737">
    <property type="term" value="C:cytoplasm"/>
    <property type="evidence" value="ECO:0007669"/>
    <property type="project" value="UniProtKB-SubCell"/>
</dbReference>
<dbReference type="GO" id="GO:0016020">
    <property type="term" value="C:membrane"/>
    <property type="evidence" value="ECO:0007669"/>
    <property type="project" value="GOC"/>
</dbReference>
<dbReference type="GO" id="GO:0019171">
    <property type="term" value="F:(3R)-hydroxyacyl-[acyl-carrier-protein] dehydratase activity"/>
    <property type="evidence" value="ECO:0007669"/>
    <property type="project" value="UniProtKB-EC"/>
</dbReference>
<dbReference type="GO" id="GO:0006633">
    <property type="term" value="P:fatty acid biosynthetic process"/>
    <property type="evidence" value="ECO:0007669"/>
    <property type="project" value="UniProtKB-UniRule"/>
</dbReference>
<dbReference type="GO" id="GO:0009245">
    <property type="term" value="P:lipid A biosynthetic process"/>
    <property type="evidence" value="ECO:0007669"/>
    <property type="project" value="UniProtKB-UniRule"/>
</dbReference>
<dbReference type="CDD" id="cd01288">
    <property type="entry name" value="FabZ"/>
    <property type="match status" value="1"/>
</dbReference>
<dbReference type="FunFam" id="3.10.129.10:FF:000001">
    <property type="entry name" value="3-hydroxyacyl-[acyl-carrier-protein] dehydratase FabZ"/>
    <property type="match status" value="1"/>
</dbReference>
<dbReference type="Gene3D" id="3.10.129.10">
    <property type="entry name" value="Hotdog Thioesterase"/>
    <property type="match status" value="1"/>
</dbReference>
<dbReference type="HAMAP" id="MF_00406">
    <property type="entry name" value="FabZ"/>
    <property type="match status" value="1"/>
</dbReference>
<dbReference type="InterPro" id="IPR013114">
    <property type="entry name" value="FabA_FabZ"/>
</dbReference>
<dbReference type="InterPro" id="IPR010084">
    <property type="entry name" value="FabZ"/>
</dbReference>
<dbReference type="InterPro" id="IPR029069">
    <property type="entry name" value="HotDog_dom_sf"/>
</dbReference>
<dbReference type="NCBIfam" id="TIGR01750">
    <property type="entry name" value="fabZ"/>
    <property type="match status" value="1"/>
</dbReference>
<dbReference type="NCBIfam" id="NF000582">
    <property type="entry name" value="PRK00006.1"/>
    <property type="match status" value="1"/>
</dbReference>
<dbReference type="PANTHER" id="PTHR30272">
    <property type="entry name" value="3-HYDROXYACYL-[ACYL-CARRIER-PROTEIN] DEHYDRATASE"/>
    <property type="match status" value="1"/>
</dbReference>
<dbReference type="PANTHER" id="PTHR30272:SF1">
    <property type="entry name" value="3-HYDROXYACYL-[ACYL-CARRIER-PROTEIN] DEHYDRATASE"/>
    <property type="match status" value="1"/>
</dbReference>
<dbReference type="Pfam" id="PF07977">
    <property type="entry name" value="FabA"/>
    <property type="match status" value="1"/>
</dbReference>
<dbReference type="SUPFAM" id="SSF54637">
    <property type="entry name" value="Thioesterase/thiol ester dehydrase-isomerase"/>
    <property type="match status" value="1"/>
</dbReference>
<gene>
    <name evidence="1" type="primary">fabZ</name>
    <name type="ordered locus">Sbal_1461</name>
</gene>
<accession>A3D2L6</accession>